<accession>A8MDA4</accession>
<protein>
    <recommendedName>
        <fullName evidence="1">Geranylgeranylglyceryl phosphate synthase</fullName>
        <shortName evidence="1">GGGP synthase</shortName>
        <shortName evidence="1">GGGPS</shortName>
        <ecNumber evidence="1">2.5.1.41</ecNumber>
    </recommendedName>
    <alternativeName>
        <fullName evidence="1">(S)-3-O-geranylgeranylglyceryl phosphate synthase</fullName>
    </alternativeName>
    <alternativeName>
        <fullName evidence="1">Phosphoglycerol geranylgeranyltransferase</fullName>
    </alternativeName>
</protein>
<comment type="function">
    <text evidence="1">Prenyltransferase that catalyzes the transfer of the geranylgeranyl moiety of geranylgeranyl diphosphate (GGPP) to the C3 hydroxyl of sn-glycerol-1-phosphate (G1P). This reaction is the first ether-bond-formation step in the biosynthesis of archaeal membrane lipids.</text>
</comment>
<comment type="catalytic activity">
    <reaction evidence="1">
        <text>sn-glycerol 1-phosphate + (2E,6E,10E)-geranylgeranyl diphosphate = sn-3-O-(geranylgeranyl)glycerol 1-phosphate + diphosphate</text>
        <dbReference type="Rhea" id="RHEA:23404"/>
        <dbReference type="ChEBI" id="CHEBI:33019"/>
        <dbReference type="ChEBI" id="CHEBI:57677"/>
        <dbReference type="ChEBI" id="CHEBI:57685"/>
        <dbReference type="ChEBI" id="CHEBI:58756"/>
        <dbReference type="EC" id="2.5.1.41"/>
    </reaction>
</comment>
<comment type="cofactor">
    <cofactor evidence="1">
        <name>Mg(2+)</name>
        <dbReference type="ChEBI" id="CHEBI:18420"/>
    </cofactor>
</comment>
<comment type="pathway">
    <text evidence="1">Membrane lipid metabolism; glycerophospholipid metabolism.</text>
</comment>
<comment type="subcellular location">
    <subcellularLocation>
        <location evidence="1">Cytoplasm</location>
    </subcellularLocation>
</comment>
<comment type="similarity">
    <text evidence="1">Belongs to the GGGP/HepGP synthase family. Group II subfamily.</text>
</comment>
<reference key="1">
    <citation type="submission" date="2007-10" db="EMBL/GenBank/DDBJ databases">
        <title>Complete sequence of Caldivirga maquilingensis IC-167.</title>
        <authorList>
            <consortium name="US DOE Joint Genome Institute"/>
            <person name="Copeland A."/>
            <person name="Lucas S."/>
            <person name="Lapidus A."/>
            <person name="Barry K."/>
            <person name="Glavina del Rio T."/>
            <person name="Dalin E."/>
            <person name="Tice H."/>
            <person name="Pitluck S."/>
            <person name="Saunders E."/>
            <person name="Brettin T."/>
            <person name="Bruce D."/>
            <person name="Detter J.C."/>
            <person name="Han C."/>
            <person name="Schmutz J."/>
            <person name="Larimer F."/>
            <person name="Land M."/>
            <person name="Hauser L."/>
            <person name="Kyrpides N."/>
            <person name="Ivanova N."/>
            <person name="Biddle J.F."/>
            <person name="Zhang Z."/>
            <person name="Fitz-Gibbon S.T."/>
            <person name="Lowe T.M."/>
            <person name="Saltikov C."/>
            <person name="House C.H."/>
            <person name="Richardson P."/>
        </authorList>
    </citation>
    <scope>NUCLEOTIDE SEQUENCE [LARGE SCALE GENOMIC DNA]</scope>
    <source>
        <strain>ATCC 700844 / DSM 13496 / JCM 10307 / IC-167</strain>
    </source>
</reference>
<organism>
    <name type="scientific">Caldivirga maquilingensis (strain ATCC 700844 / DSM 13496 / JCM 10307 / IC-167)</name>
    <dbReference type="NCBI Taxonomy" id="397948"/>
    <lineage>
        <taxon>Archaea</taxon>
        <taxon>Thermoproteota</taxon>
        <taxon>Thermoprotei</taxon>
        <taxon>Thermoproteales</taxon>
        <taxon>Thermoproteaceae</taxon>
        <taxon>Caldivirga</taxon>
    </lineage>
</organism>
<evidence type="ECO:0000255" key="1">
    <source>
        <dbReference type="HAMAP-Rule" id="MF_00112"/>
    </source>
</evidence>
<sequence length="267" mass="28359">MTVFESLMNKLTEKGALHFSLLDPDKVTMDKFIELAKGAEKAGSDALMIGGSYGVNEGTLDNYIDAVKQEVKLPIILFPGSVAGLSRRADAVLFLSVLNSTDPYYIIGAQVQAAVLMAKHYSNLESIPMAYIIVGEGGAVGFASYAKPIPFHMEDVIVAYALAAYYMGFSAIYLEAGSGAREPVPSSVVAKVKRAVRNKILMVGGGIKSPEAAYSIALAGADVIITGTVIEESPAVVLKDIVDAVHRGGLRRLSNSNENANAWVNDK</sequence>
<name>GGGPS_CALMQ</name>
<proteinExistence type="inferred from homology"/>
<gene>
    <name type="ordered locus">Cmaq_0928</name>
</gene>
<keyword id="KW-0963">Cytoplasm</keyword>
<keyword id="KW-0444">Lipid biosynthesis</keyword>
<keyword id="KW-0443">Lipid metabolism</keyword>
<keyword id="KW-0460">Magnesium</keyword>
<keyword id="KW-0479">Metal-binding</keyword>
<keyword id="KW-0594">Phospholipid biosynthesis</keyword>
<keyword id="KW-1208">Phospholipid metabolism</keyword>
<keyword id="KW-1185">Reference proteome</keyword>
<keyword id="KW-0808">Transferase</keyword>
<feature type="chain" id="PRO_0000350672" description="Geranylgeranylglyceryl phosphate synthase">
    <location>
        <begin position="1"/>
        <end position="267"/>
    </location>
</feature>
<feature type="binding site" evidence="1">
    <location>
        <position position="23"/>
    </location>
    <ligand>
        <name>Mg(2+)</name>
        <dbReference type="ChEBI" id="CHEBI:18420"/>
    </ligand>
</feature>
<feature type="binding site" evidence="1">
    <location>
        <position position="52"/>
    </location>
    <ligand>
        <name>Mg(2+)</name>
        <dbReference type="ChEBI" id="CHEBI:18420"/>
    </ligand>
</feature>
<feature type="binding site" evidence="1">
    <location>
        <begin position="173"/>
        <end position="179"/>
    </location>
    <ligand>
        <name>sn-glycerol 1-phosphate</name>
        <dbReference type="ChEBI" id="CHEBI:57685"/>
    </ligand>
</feature>
<feature type="binding site" evidence="1">
    <location>
        <begin position="205"/>
        <end position="206"/>
    </location>
    <ligand>
        <name>sn-glycerol 1-phosphate</name>
        <dbReference type="ChEBI" id="CHEBI:57685"/>
    </ligand>
</feature>
<feature type="binding site" evidence="1">
    <location>
        <begin position="227"/>
        <end position="228"/>
    </location>
    <ligand>
        <name>sn-glycerol 1-phosphate</name>
        <dbReference type="ChEBI" id="CHEBI:57685"/>
    </ligand>
</feature>
<dbReference type="EC" id="2.5.1.41" evidence="1"/>
<dbReference type="EMBL" id="CP000852">
    <property type="protein sequence ID" value="ABW01760.1"/>
    <property type="molecule type" value="Genomic_DNA"/>
</dbReference>
<dbReference type="RefSeq" id="WP_012185979.1">
    <property type="nucleotide sequence ID" value="NC_009954.1"/>
</dbReference>
<dbReference type="SMR" id="A8MDA4"/>
<dbReference type="STRING" id="397948.Cmaq_0928"/>
<dbReference type="GeneID" id="5709748"/>
<dbReference type="KEGG" id="cma:Cmaq_0928"/>
<dbReference type="eggNOG" id="arCOG01085">
    <property type="taxonomic scope" value="Archaea"/>
</dbReference>
<dbReference type="HOGENOM" id="CLU_068610_0_0_2"/>
<dbReference type="OrthoDB" id="7409at2157"/>
<dbReference type="UniPathway" id="UPA00940"/>
<dbReference type="Proteomes" id="UP000001137">
    <property type="component" value="Chromosome"/>
</dbReference>
<dbReference type="GO" id="GO:0005737">
    <property type="term" value="C:cytoplasm"/>
    <property type="evidence" value="ECO:0007669"/>
    <property type="project" value="UniProtKB-SubCell"/>
</dbReference>
<dbReference type="GO" id="GO:0000287">
    <property type="term" value="F:magnesium ion binding"/>
    <property type="evidence" value="ECO:0007669"/>
    <property type="project" value="UniProtKB-UniRule"/>
</dbReference>
<dbReference type="GO" id="GO:0047294">
    <property type="term" value="F:phosphoglycerol geranylgeranyltransferase activity"/>
    <property type="evidence" value="ECO:0007669"/>
    <property type="project" value="UniProtKB-UniRule"/>
</dbReference>
<dbReference type="GO" id="GO:0046474">
    <property type="term" value="P:glycerophospholipid biosynthetic process"/>
    <property type="evidence" value="ECO:0007669"/>
    <property type="project" value="UniProtKB-UniRule"/>
</dbReference>
<dbReference type="CDD" id="cd02812">
    <property type="entry name" value="PcrB_like"/>
    <property type="match status" value="1"/>
</dbReference>
<dbReference type="FunFam" id="3.20.20.390:FF:000001">
    <property type="entry name" value="Heptaprenylglyceryl phosphate synthase"/>
    <property type="match status" value="1"/>
</dbReference>
<dbReference type="Gene3D" id="3.20.20.390">
    <property type="entry name" value="FMN-linked oxidoreductases"/>
    <property type="match status" value="1"/>
</dbReference>
<dbReference type="HAMAP" id="MF_00112">
    <property type="entry name" value="GGGP_HepGP_synthase"/>
    <property type="match status" value="1"/>
</dbReference>
<dbReference type="InterPro" id="IPR039074">
    <property type="entry name" value="GGGP/HepGP_synthase_I"/>
</dbReference>
<dbReference type="InterPro" id="IPR038597">
    <property type="entry name" value="GGGP/HepGP_synthase_sf"/>
</dbReference>
<dbReference type="InterPro" id="IPR008205">
    <property type="entry name" value="GGGP_HepGP_synthase"/>
</dbReference>
<dbReference type="InterPro" id="IPR010946">
    <property type="entry name" value="GGGP_synth"/>
</dbReference>
<dbReference type="NCBIfam" id="TIGR01769">
    <property type="entry name" value="GGGP"/>
    <property type="match status" value="1"/>
</dbReference>
<dbReference type="NCBIfam" id="TIGR01768">
    <property type="entry name" value="GGGP-family"/>
    <property type="match status" value="1"/>
</dbReference>
<dbReference type="NCBIfam" id="NF003198">
    <property type="entry name" value="PRK04169.1-2"/>
    <property type="match status" value="1"/>
</dbReference>
<dbReference type="PANTHER" id="PTHR40029">
    <property type="match status" value="1"/>
</dbReference>
<dbReference type="PANTHER" id="PTHR40029:SF2">
    <property type="entry name" value="HEPTAPRENYLGLYCERYL PHOSPHATE SYNTHASE"/>
    <property type="match status" value="1"/>
</dbReference>
<dbReference type="Pfam" id="PF01884">
    <property type="entry name" value="PcrB"/>
    <property type="match status" value="1"/>
</dbReference>
<dbReference type="SUPFAM" id="SSF51395">
    <property type="entry name" value="FMN-linked oxidoreductases"/>
    <property type="match status" value="1"/>
</dbReference>